<name>GP_BHAV</name>
<comment type="function">
    <molecule>Glycoprotein N</molecule>
    <text evidence="1 2 3 4">Structural component of the virion that interacts with glycoprotein C (By similarity). It shields the hydrophobic fusion loops of the glycoprotein C, preventing premature fusion (By similarity). The glycoprotein protrusions are arranged on an icosahedral lattice, with T=12 triangulation (By similarity). They are able to attach the virion to the host cell receptor CD209/DC-SIGN and to promote fusion of membranes with the late endosome after endocytosis of the virion (By similarity). Plays a role in the packaging of ribonucleoproteins during virus assembly (By similarity).</text>
</comment>
<comment type="function">
    <molecule>Glycoprotein C</molecule>
    <text evidence="1 2 3 4">Structural component of the virion that interacts with glycoprotein N (By similarity). Acts as a class II fusion protein that is activated upon acidification and subsequent repositioning of the glycoprotein N (By similarity). The glycoprotein protrusions are arranged on an icosahedral lattice, with T=12 triangulation (By similarity). They are able to attach the virion to the host cell receptor CD209/DC-SIGN and to promote fusion of membranes with the late endosome after endocytosis of the virion (By similarity).</text>
</comment>
<comment type="subunit">
    <molecule>Glycoprotein N</molecule>
    <text evidence="2">Heterodimer with glycoprotein C.</text>
</comment>
<comment type="subunit">
    <molecule>Glycoprotein C</molecule>
    <text evidence="1 2">Heterodimer with glycoprotein N (By similarity). Homotrimer (postfusion) (By similarity).</text>
</comment>
<comment type="subcellular location">
    <molecule>Glycoprotein N</molecule>
    <subcellularLocation>
        <location evidence="3">Virion membrane</location>
        <topology evidence="3">Single-pass type I membrane protein</topology>
    </subcellularLocation>
    <subcellularLocation>
        <location evidence="2">Host Golgi apparatus membrane</location>
        <topology evidence="3">Single-pass type I membrane protein</topology>
    </subcellularLocation>
    <subcellularLocation>
        <location evidence="3">Host endoplasmic reticulum membrane</location>
        <topology evidence="3">Single-pass type I membrane protein</topology>
    </subcellularLocation>
    <text evidence="3">Interaction between Glycoprotein N and Glycoprotein C is essential for proper targeting of Glycoprotein C to the Golgi complex, where virion budding occurs.</text>
</comment>
<comment type="subcellular location">
    <molecule>Glycoprotein C</molecule>
    <subcellularLocation>
        <location evidence="3">Virion membrane</location>
        <topology evidence="3">Single-pass type I membrane protein</topology>
    </subcellularLocation>
    <subcellularLocation>
        <location evidence="2">Host Golgi apparatus membrane</location>
        <topology evidence="3">Single-pass type I membrane protein</topology>
    </subcellularLocation>
    <text evidence="3">Interaction between Glycoprotein N and Glycoprotein C is essential for proper targeting of Glycoprotein C to the Golgi complex, where virion budding occurs.</text>
</comment>
<comment type="domain">
    <molecule>Glycoprotein N</molecule>
    <text evidence="3">Contains a Golgi retention signal on its C-terminus. The cytoplasmic tail specifically interacts with the ribonucleoproteins and is critical for genome packaging.</text>
</comment>
<comment type="PTM">
    <molecule>Envelopment polyprotein</molecule>
    <text evidence="4">Specific enzymatic cleavages in vivo yield mature proteins Glycoprotein C, and Glycoprotein N.</text>
</comment>
<comment type="PTM">
    <molecule>Glycoprotein N</molecule>
    <text evidence="3">Glycosylated.</text>
</comment>
<comment type="PTM">
    <molecule>Glycoprotein C</molecule>
    <text evidence="3">Glycosylated.</text>
</comment>
<comment type="PTM">
    <molecule>Glycoprotein C</molecule>
    <text evidence="3">Palmitoylated.</text>
</comment>
<comment type="miscellaneous">
    <text evidence="9">The sequence shown is that of isolate Human/United States/1/2009.</text>
</comment>
<comment type="miscellaneous">
    <text evidence="7">Terminal conserved complementary sequences assemble as a 'panhandle structure' in each genome segment.</text>
</comment>
<comment type="similarity">
    <text evidence="9">Belongs to the phlebovirus envelope glycoprotein family.</text>
</comment>
<reference key="1">
    <citation type="journal article" date="2013" name="J. Virol.">
        <title>Characterization of the Bhanja serogroup viruses (Bunyaviridae): a novel species of the genus Phlebovirus and its relationship with other emerging tick-borne phleboviruses.</title>
        <authorList>
            <person name="Matsuno K."/>
            <person name="Weisend C."/>
            <person name="Travassos da Rosa A.P."/>
            <person name="Anzick S.L."/>
            <person name="Dahlstrom E."/>
            <person name="Porcella S.F."/>
            <person name="Dorward D.W."/>
            <person name="Yu X.J."/>
            <person name="Tesh R.B."/>
            <person name="Ebihara H."/>
        </authorList>
    </citation>
    <scope>NUCLEOTIDE SEQUENCE [GENOMIC DNA]</scope>
    <scope>CHARACTERIZATION</scope>
    <source>
        <strain evidence="9">Isolate Rhipicephalus decoloratus/Nigeria/ibAr2709/1968</strain>
    </source>
</reference>
<sequence>MMFSRVMQLALICAVTCEDNPCLWERFTNSRDIEFMIPVVNLSTSRRLSMSQRICMVSMGKHWSRIFSEGEEDRGMKDLDPLLMSSLNWRGTAKTRSSNSFNFDILDGIFLGFLDLVKWGEEADRHTPIHPECIKSKVCGFMTASGPRIKTCTGKFRGADRHGHCTNRATPHEATNVISVGVQHAQEANQVDEHEARYISEARKSINPEICSIDGVEINQCDLASPGRWLMLHYASFRLQEGSLVYLSPGLNIKWSQINVPASDFYCINVSDHLNTHYRPCEVNCTDNCQGDELYCSVHQCARSAECKCSFIGSRGMAEVQIGDRWFKPAVVGSQQFFVKEDVPVLQQPSADCTTCSMTCTAEGIAISSIKDELKDVTVCVEGFCSTRVSKGSKVWKIEFHNQYPSSGSVALARGTTVSGETFELTAECGRRTGCEQINCLFCREMLSNPQCYPYGKWFLLFLILATLYIIVALLKTIMRIFMACLSVLYGPFIIIIKISRCLGRLGKRKGERTYVRLMEALDDERKPEVVRAPVSLGRTKQPRIVLFIVLALLVHMALCCDESRLVEETSVTCNPGPDNIFSCSTKEMITVKELRAGKTICVSLKGPGGSLSSPIKIKMLDIVGRSDLLDIYFTFNGHANCKSVRRCRWAGSCGNSGCLGVGKEDYDRELGDQESSLHPNWRDCYDGCGGAACGCFNAAPSCIFLKRYVTNADSRVFKVFKPSAWFLSTKIVVETTSHKEDVTLKSGEAKVIDKVSFHYRTDKNLFAGMSIPPIVTEVKREGKPLSFFLENQGQHPKCKDENSARTSSASNCIVDQNTISANVRVDDVSCRSNLVSISGMSTLKPLPQRVGDFLIQLHNDEPVLLATGDSGVVEGELQIDLSHKKISIKVDTTVCRGTVKELKGCVGCTKGAFASLEIHSTSAGSASLQCSLSSCYMEVQKGVNNVNCSLRFSKAVVEETCVLACSGSKEQLSIKGNLIIGGDFKKLTEDSATSFSHTDSKDTRIHLQTGLMNWLDTLFGASLLGKILGIGLAILSPFILILILRWILRVVLRRSRIRREPKYEMAKYS</sequence>
<protein>
    <recommendedName>
        <fullName>Envelopment polyprotein</fullName>
    </recommendedName>
    <alternativeName>
        <fullName>M polyprotein</fullName>
    </alternativeName>
    <component>
        <recommendedName>
            <fullName evidence="4">Glycoprotein N</fullName>
            <shortName>Gn</shortName>
        </recommendedName>
        <alternativeName>
            <fullName>Glycoprotein G1</fullName>
        </alternativeName>
    </component>
    <component>
        <recommendedName>
            <fullName evidence="4">Glycoprotein C</fullName>
            <shortName>Gc</shortName>
        </recommendedName>
        <alternativeName>
            <fullName>Glycoprotein G2</fullName>
        </alternativeName>
    </component>
</protein>
<keyword id="KW-1015">Disulfide bond</keyword>
<keyword id="KW-1170">Fusion of virus membrane with host endosomal membrane</keyword>
<keyword id="KW-1168">Fusion of virus membrane with host membrane</keyword>
<keyword id="KW-0325">Glycoprotein</keyword>
<keyword id="KW-1038">Host endoplasmic reticulum</keyword>
<keyword id="KW-1040">Host Golgi apparatus</keyword>
<keyword id="KW-1043">Host membrane</keyword>
<keyword id="KW-0945">Host-virus interaction</keyword>
<keyword id="KW-0449">Lipoprotein</keyword>
<keyword id="KW-0472">Membrane</keyword>
<keyword id="KW-0564">Palmitate</keyword>
<keyword id="KW-1185">Reference proteome</keyword>
<keyword id="KW-0732">Signal</keyword>
<keyword id="KW-0812">Transmembrane</keyword>
<keyword id="KW-1133">Transmembrane helix</keyword>
<keyword id="KW-1161">Viral attachment to host cell</keyword>
<keyword id="KW-1234">Viral attachment to host entry receptor</keyword>
<keyword id="KW-1162">Viral penetration into host cytoplasm</keyword>
<keyword id="KW-0946">Virion</keyword>
<keyword id="KW-1160">Virus entry into host cell</keyword>
<dbReference type="EMBL" id="JX961617">
    <property type="protein sequence ID" value="AGC60116.1"/>
    <property type="molecule type" value="Genomic_RNA"/>
</dbReference>
<dbReference type="RefSeq" id="YP_009141014.1">
    <property type="nucleotide sequence ID" value="NC_027141.1"/>
</dbReference>
<dbReference type="SMR" id="L7V0S7"/>
<dbReference type="GlyCosmos" id="L7V0S7">
    <property type="glycosylation" value="1 site, No reported glycans"/>
</dbReference>
<dbReference type="KEGG" id="vg:24404825"/>
<dbReference type="OrthoDB" id="2349at10239"/>
<dbReference type="Proteomes" id="UP000202403">
    <property type="component" value="Genome"/>
</dbReference>
<dbReference type="GO" id="GO:0044167">
    <property type="term" value="C:host cell endoplasmic reticulum membrane"/>
    <property type="evidence" value="ECO:0007669"/>
    <property type="project" value="UniProtKB-SubCell"/>
</dbReference>
<dbReference type="GO" id="GO:0044178">
    <property type="term" value="C:host cell Golgi membrane"/>
    <property type="evidence" value="ECO:0007669"/>
    <property type="project" value="UniProtKB-SubCell"/>
</dbReference>
<dbReference type="GO" id="GO:0016020">
    <property type="term" value="C:membrane"/>
    <property type="evidence" value="ECO:0007669"/>
    <property type="project" value="UniProtKB-KW"/>
</dbReference>
<dbReference type="GO" id="GO:0055036">
    <property type="term" value="C:virion membrane"/>
    <property type="evidence" value="ECO:0007669"/>
    <property type="project" value="UniProtKB-SubCell"/>
</dbReference>
<dbReference type="GO" id="GO:0098670">
    <property type="term" value="P:entry receptor-mediated virion attachment to host cell"/>
    <property type="evidence" value="ECO:0007669"/>
    <property type="project" value="UniProtKB-KW"/>
</dbReference>
<dbReference type="GO" id="GO:0039654">
    <property type="term" value="P:fusion of virus membrane with host endosome membrane"/>
    <property type="evidence" value="ECO:0007669"/>
    <property type="project" value="UniProtKB-KW"/>
</dbReference>
<dbReference type="GO" id="GO:0046718">
    <property type="term" value="P:symbiont entry into host cell"/>
    <property type="evidence" value="ECO:0007669"/>
    <property type="project" value="UniProtKB-KW"/>
</dbReference>
<dbReference type="Gene3D" id="2.60.40.3770">
    <property type="match status" value="1"/>
</dbReference>
<dbReference type="Gene3D" id="2.60.98.50">
    <property type="match status" value="1"/>
</dbReference>
<dbReference type="InterPro" id="IPR043603">
    <property type="entry name" value="Phlebo_G2_C"/>
</dbReference>
<dbReference type="InterPro" id="IPR010826">
    <property type="entry name" value="Phlebovirus_G1"/>
</dbReference>
<dbReference type="InterPro" id="IPR009878">
    <property type="entry name" value="Phlebovirus_G2_fusion"/>
</dbReference>
<dbReference type="Pfam" id="PF19019">
    <property type="entry name" value="Phlebo_G2_C"/>
    <property type="match status" value="1"/>
</dbReference>
<dbReference type="Pfam" id="PF07243">
    <property type="entry name" value="Phlebovirus_G1"/>
    <property type="match status" value="1"/>
</dbReference>
<dbReference type="Pfam" id="PF07245">
    <property type="entry name" value="Phlebovirus_G2"/>
    <property type="match status" value="1"/>
</dbReference>
<organismHost>
    <name type="scientific">Amblyomma variegatum</name>
    <name type="common">Tropical bont tick</name>
    <dbReference type="NCBI Taxonomy" id="34610"/>
</organismHost>
<organismHost>
    <name type="scientific">Atelerix albiventris</name>
    <name type="common">Middle-African hedgehog</name>
    <name type="synonym">Four-toed hedgehog</name>
    <dbReference type="NCBI Taxonomy" id="9368"/>
</organismHost>
<organismHost>
    <name type="scientific">Bos taurus</name>
    <name type="common">Bovine</name>
    <dbReference type="NCBI Taxonomy" id="9913"/>
</organismHost>
<organismHost>
    <name type="scientific">Capra hircus</name>
    <name type="common">Goat</name>
    <dbReference type="NCBI Taxonomy" id="9925"/>
</organismHost>
<organismHost>
    <name type="scientific">Capreolus capreolus</name>
    <name type="common">European roe deer</name>
    <name type="synonym">Cervus capreolus</name>
    <dbReference type="NCBI Taxonomy" id="9858"/>
</organismHost>
<organismHost>
    <name type="scientific">Dermacentor marginatus</name>
    <name type="common">Ornate sheep tick</name>
    <name type="synonym">Acarus marginatus</name>
    <dbReference type="NCBI Taxonomy" id="49202"/>
</organismHost>
<organismHost>
    <name type="scientific">Haemaphysalis intermedia</name>
    <dbReference type="NCBI Taxonomy" id="1027255"/>
</organismHost>
<organismHost>
    <name type="scientific">Haemaphysalis punctata</name>
    <dbReference type="NCBI Taxonomy" id="49204"/>
</organismHost>
<organismHost>
    <name type="scientific">Haemaphysalis sulcata</name>
    <dbReference type="NCBI Taxonomy" id="490559"/>
</organismHost>
<organismHost>
    <name type="scientific">Homo sapiens</name>
    <name type="common">Human</name>
    <dbReference type="NCBI Taxonomy" id="9606"/>
</organismHost>
<organismHost>
    <name type="scientific">Hyalomma detritum</name>
    <dbReference type="NCBI Taxonomy" id="572043"/>
</organismHost>
<organismHost>
    <name type="scientific">Hyalomma dromedarii</name>
    <name type="common">Camel tick</name>
    <dbReference type="NCBI Taxonomy" id="34626"/>
</organismHost>
<organismHost>
    <name type="scientific">Hyalomma marginatum</name>
    <dbReference type="NCBI Taxonomy" id="34627"/>
</organismHost>
<organismHost>
    <name type="scientific">Hyalomma truncatum</name>
    <dbReference type="NCBI Taxonomy" id="72855"/>
</organismHost>
<organismHost>
    <name type="scientific">Ixodes ricinus</name>
    <name type="common">Common tick</name>
    <name type="synonym">Acarus ricinus</name>
    <dbReference type="NCBI Taxonomy" id="34613"/>
</organismHost>
<organismHost>
    <name type="scientific">Ixodes vespertilionis</name>
    <dbReference type="NCBI Taxonomy" id="59656"/>
</organismHost>
<organismHost>
    <name type="scientific">Ovis aries</name>
    <name type="common">Sheep</name>
    <dbReference type="NCBI Taxonomy" id="9940"/>
</organismHost>
<organismHost>
    <name type="scientific">Rhipicephalus annulatus</name>
    <dbReference type="NCBI Taxonomy" id="34611"/>
</organismHost>
<organismHost>
    <name type="scientific">Rhipicephalus appendiculatus</name>
    <name type="common">Brown ear tick</name>
    <dbReference type="NCBI Taxonomy" id="34631"/>
</organismHost>
<organismHost>
    <name type="scientific">Rhipicephalus bursa</name>
    <name type="common">Tick</name>
    <dbReference type="NCBI Taxonomy" id="67831"/>
</organismHost>
<organismHost>
    <name type="scientific">Rhipicephalus decoloratus</name>
    <name type="common">African blue tick</name>
    <name type="synonym">Boophilus decoloratus</name>
    <dbReference type="NCBI Taxonomy" id="60189"/>
</organismHost>
<organismHost>
    <name type="scientific">Rhipicephalus geigyi</name>
    <dbReference type="NCBI Taxonomy" id="136141"/>
</organismHost>
<organismHost>
    <name type="scientific">Rhipicephalus sanguineus</name>
    <name type="common">Brown dog tick</name>
    <name type="synonym">Ixodes sanguineus</name>
    <dbReference type="NCBI Taxonomy" id="34632"/>
</organismHost>
<organismHost>
    <name type="scientific">Sus scrofa</name>
    <name type="common">Pig</name>
    <dbReference type="NCBI Taxonomy" id="9823"/>
</organismHost>
<organismHost>
    <name type="scientific">Xerus erythropus</name>
    <name type="common">Striped ground squirrel</name>
    <dbReference type="NCBI Taxonomy" id="327507"/>
</organismHost>
<organism>
    <name type="scientific">Bhanja virus</name>
    <name type="common">BHAV</name>
    <dbReference type="NCBI Taxonomy" id="1213620"/>
    <lineage>
        <taxon>Viruses</taxon>
        <taxon>Riboviria</taxon>
        <taxon>Orthornavirae</taxon>
        <taxon>Negarnaviricota</taxon>
        <taxon>Polyploviricotina</taxon>
        <taxon>Ellioviricetes</taxon>
        <taxon>Bunyavirales</taxon>
        <taxon>Phenuiviridae</taxon>
        <taxon>Bandavirus</taxon>
        <taxon>Bandavirus bhanjanagarense</taxon>
    </lineage>
</organism>
<accession>L7V0S7</accession>
<gene>
    <name type="primary">GP</name>
</gene>
<proteinExistence type="evidence at protein level"/>
<feature type="signal peptide" evidence="6">
    <location>
        <begin position="1"/>
        <end position="17"/>
    </location>
</feature>
<feature type="chain" id="PRO_0000455550" description="Envelopment polyprotein">
    <location>
        <begin position="18"/>
        <end position="1070"/>
    </location>
</feature>
<feature type="chain" id="PRO_0000455551" description="Glycoprotein N" evidence="6">
    <location>
        <begin position="18"/>
        <end position="549"/>
    </location>
</feature>
<feature type="propeptide" id="PRO_0000455552" evidence="3">
    <location>
        <begin position="550"/>
        <end position="560"/>
    </location>
</feature>
<feature type="chain" id="PRO_0000455553" description="Glycoprotein C" evidence="6">
    <location>
        <begin position="561"/>
        <end position="1070"/>
    </location>
</feature>
<feature type="topological domain" description="Lumenal" evidence="3">
    <location>
        <begin position="18"/>
        <end position="457"/>
    </location>
</feature>
<feature type="transmembrane region" description="Helical" evidence="6">
    <location>
        <begin position="458"/>
        <end position="478"/>
    </location>
</feature>
<feature type="topological domain" description="Cytoplasmic" evidence="3">
    <location>
        <begin position="479"/>
        <end position="536"/>
    </location>
</feature>
<feature type="topological domain" description="Lumenal" evidence="6">
    <location>
        <begin position="550"/>
        <end position="1023"/>
    </location>
</feature>
<feature type="transmembrane region" description="Helical" evidence="6">
    <location>
        <begin position="1024"/>
        <end position="1044"/>
    </location>
</feature>
<feature type="topological domain" description="Cytoplasmic" evidence="3">
    <location>
        <begin position="1045"/>
        <end position="1070"/>
    </location>
</feature>
<feature type="region of interest" description="Golgi retention signal" evidence="3">
    <location>
        <begin position="480"/>
        <end position="522"/>
    </location>
</feature>
<feature type="region of interest" description="Internal signal sequence for glycoprotein C" evidence="8">
    <location>
        <begin position="541"/>
        <end position="560"/>
    </location>
</feature>
<feature type="region of interest" description="Fusion loop" evidence="5">
    <location>
        <begin position="648"/>
        <end position="654"/>
    </location>
</feature>
<feature type="region of interest" description="Fusion loop" evidence="4">
    <location>
        <begin position="690"/>
        <end position="701"/>
    </location>
</feature>
<feature type="site" description="Cleavage; by host signal peptidase" evidence="3">
    <location>
        <begin position="560"/>
        <end position="561"/>
    </location>
</feature>
<feature type="site" description="Important for glycoprotein C and glycoprotein N subcellular location" evidence="3">
    <location>
        <position position="1068"/>
    </location>
</feature>
<feature type="glycosylation site" description="N-linked (GlcNAc...) asparagine; by host" evidence="6">
    <location>
        <position position="269"/>
    </location>
</feature>
<feature type="disulfide bond" evidence="5">
    <location>
        <begin position="22"/>
        <end position="55"/>
    </location>
</feature>
<feature type="disulfide bond" evidence="5">
    <location>
        <begin position="152"/>
        <end position="165"/>
    </location>
</feature>
<feature type="disulfide bond" evidence="5">
    <location>
        <begin position="211"/>
        <end position="221"/>
    </location>
</feature>
<feature type="disulfide bond" evidence="5">
    <location>
        <begin position="267"/>
        <end position="309"/>
    </location>
</feature>
<feature type="disulfide bond" evidence="5">
    <location>
        <begin position="296"/>
        <end position="301"/>
    </location>
</feature>
<feature type="disulfide bond" evidence="5">
    <location>
        <begin position="353"/>
        <end position="356"/>
    </location>
</feature>
<feature type="disulfide bond" evidence="5">
    <location>
        <begin position="360"/>
        <end position="429"/>
    </location>
</feature>
<feature type="disulfide bond" evidence="5">
    <location>
        <begin position="380"/>
        <end position="385"/>
    </location>
</feature>
<feature type="disulfide bond" evidence="4">
    <location>
        <begin position="561"/>
        <end position="602"/>
    </location>
</feature>
<feature type="disulfide bond" evidence="4">
    <location>
        <begin position="574"/>
        <end position="584"/>
    </location>
</feature>
<feature type="disulfide bond" evidence="4">
    <location>
        <begin position="642"/>
        <end position="831"/>
    </location>
</feature>
<feature type="disulfide bond" evidence="4">
    <location>
        <begin position="648"/>
        <end position="696"/>
    </location>
</feature>
<feature type="disulfide bond" evidence="4">
    <location>
        <begin position="654"/>
        <end position="703"/>
    </location>
</feature>
<feature type="disulfide bond" evidence="4">
    <location>
        <begin position="659"/>
        <end position="685"/>
    </location>
</feature>
<feature type="disulfide bond" evidence="4">
    <location>
        <begin position="689"/>
        <end position="694"/>
    </location>
</feature>
<feature type="disulfide bond" evidence="4">
    <location>
        <begin position="799"/>
        <end position="813"/>
    </location>
</feature>
<feature type="disulfide bond" evidence="4">
    <location>
        <begin position="896"/>
        <end position="966"/>
    </location>
</feature>
<feature type="disulfide bond" evidence="4">
    <location>
        <begin position="906"/>
        <end position="909"/>
    </location>
</feature>
<evidence type="ECO:0000250" key="1">
    <source>
        <dbReference type="UniProtKB" id="J3WAX0"/>
    </source>
</evidence>
<evidence type="ECO:0000250" key="2">
    <source>
        <dbReference type="UniProtKB" id="P03518"/>
    </source>
</evidence>
<evidence type="ECO:0000250" key="3">
    <source>
        <dbReference type="UniProtKB" id="P09613"/>
    </source>
</evidence>
<evidence type="ECO:0000250" key="4">
    <source>
        <dbReference type="UniProtKB" id="P21401"/>
    </source>
</evidence>
<evidence type="ECO:0000250" key="5">
    <source>
        <dbReference type="UniProtKB" id="R4V2Q5"/>
    </source>
</evidence>
<evidence type="ECO:0000255" key="6"/>
<evidence type="ECO:0000269" key="7">
    <source>
    </source>
</evidence>
<evidence type="ECO:0000303" key="8">
    <source>
    </source>
</evidence>
<evidence type="ECO:0000305" key="9"/>